<keyword id="KW-0963">Cytoplasm</keyword>
<keyword id="KW-0413">Isomerase</keyword>
<keyword id="KW-0627">Porphyrin biosynthesis</keyword>
<keyword id="KW-0663">Pyridoxal phosphate</keyword>
<gene>
    <name evidence="1" type="primary">hemL</name>
    <name type="ordered locus">BCG_0567</name>
</gene>
<organism>
    <name type="scientific">Mycobacterium bovis (strain BCG / Pasteur 1173P2)</name>
    <dbReference type="NCBI Taxonomy" id="410289"/>
    <lineage>
        <taxon>Bacteria</taxon>
        <taxon>Bacillati</taxon>
        <taxon>Actinomycetota</taxon>
        <taxon>Actinomycetes</taxon>
        <taxon>Mycobacteriales</taxon>
        <taxon>Mycobacteriaceae</taxon>
        <taxon>Mycobacterium</taxon>
        <taxon>Mycobacterium tuberculosis complex</taxon>
    </lineage>
</organism>
<comment type="catalytic activity">
    <reaction evidence="1">
        <text>(S)-4-amino-5-oxopentanoate = 5-aminolevulinate</text>
        <dbReference type="Rhea" id="RHEA:14265"/>
        <dbReference type="ChEBI" id="CHEBI:57501"/>
        <dbReference type="ChEBI" id="CHEBI:356416"/>
        <dbReference type="EC" id="5.4.3.8"/>
    </reaction>
</comment>
<comment type="cofactor">
    <cofactor evidence="1">
        <name>pyridoxal 5'-phosphate</name>
        <dbReference type="ChEBI" id="CHEBI:597326"/>
    </cofactor>
</comment>
<comment type="pathway">
    <text evidence="1">Porphyrin-containing compound metabolism; protoporphyrin-IX biosynthesis; 5-aminolevulinate from L-glutamyl-tRNA(Glu): step 2/2.</text>
</comment>
<comment type="subunit">
    <text evidence="1">Homodimer.</text>
</comment>
<comment type="subcellular location">
    <subcellularLocation>
        <location evidence="1">Cytoplasm</location>
    </subcellularLocation>
</comment>
<comment type="similarity">
    <text evidence="1">Belongs to the class-III pyridoxal-phosphate-dependent aminotransferase family. HemL subfamily.</text>
</comment>
<name>GSA_MYCBP</name>
<evidence type="ECO:0000255" key="1">
    <source>
        <dbReference type="HAMAP-Rule" id="MF_00375"/>
    </source>
</evidence>
<evidence type="ECO:0000256" key="2">
    <source>
        <dbReference type="SAM" id="MobiDB-lite"/>
    </source>
</evidence>
<sequence>MGSTEQATSRVRGAARTSAQLFEAACSVIPGGVNSPVRAFTAVGGTPRFITEAHGCWLIDADGNRYVDLVCSWGPMILGHAHPAVVEAVAKAAARGLSFGAPTPAETQLAGEIIGRVAPVERIRLVNSGTEATMSAVRLARGFTGRAKIVKFSGCYHGHVDALLADAGSGVATLGLCDDPQRPASPRSQSSRGLPSSPGVTGAAAADTIVLPYNDIDAVQQTFARFGEQIAAVITEASPGNMGVVPPGPGFNAALRAITAEHGALLILDEVMTGFRVSRSGWYGIDPVPADLFAFGKVMSGGMPAAAFGGRAEVMQRLAPLGPVYQAGTLSGNPVAVAAGLATLRAADDAVYTALDANADRLAGLLSEALTDAVVPHQISRAGNMLSVFFGETPVTDFASARASQTWRYPAFFHAMLDAGVYPPCSAFEAWFVSAALDDAAFGRIANALPAAARAAAQERPA</sequence>
<proteinExistence type="inferred from homology"/>
<reference key="1">
    <citation type="journal article" date="2007" name="Proc. Natl. Acad. Sci. U.S.A.">
        <title>Genome plasticity of BCG and impact on vaccine efficacy.</title>
        <authorList>
            <person name="Brosch R."/>
            <person name="Gordon S.V."/>
            <person name="Garnier T."/>
            <person name="Eiglmeier K."/>
            <person name="Frigui W."/>
            <person name="Valenti P."/>
            <person name="Dos Santos S."/>
            <person name="Duthoy S."/>
            <person name="Lacroix C."/>
            <person name="Garcia-Pelayo C."/>
            <person name="Inwald J.K."/>
            <person name="Golby P."/>
            <person name="Garcia J.N."/>
            <person name="Hewinson R.G."/>
            <person name="Behr M.A."/>
            <person name="Quail M.A."/>
            <person name="Churcher C."/>
            <person name="Barrell B.G."/>
            <person name="Parkhill J."/>
            <person name="Cole S.T."/>
        </authorList>
    </citation>
    <scope>NUCLEOTIDE SEQUENCE [LARGE SCALE GENOMIC DNA]</scope>
    <source>
        <strain>BCG / Pasteur 1173P2</strain>
    </source>
</reference>
<protein>
    <recommendedName>
        <fullName evidence="1">Glutamate-1-semialdehyde 2,1-aminomutase</fullName>
        <shortName evidence="1">GSA</shortName>
        <ecNumber evidence="1">5.4.3.8</ecNumber>
    </recommendedName>
    <alternativeName>
        <fullName evidence="1">Glutamate-1-semialdehyde aminotransferase</fullName>
        <shortName evidence="1">GSA-AT</shortName>
    </alternativeName>
</protein>
<accession>A1KG00</accession>
<dbReference type="EC" id="5.4.3.8" evidence="1"/>
<dbReference type="EMBL" id="AM408590">
    <property type="protein sequence ID" value="CAL70552.1"/>
    <property type="molecule type" value="Genomic_DNA"/>
</dbReference>
<dbReference type="RefSeq" id="WP_003402844.1">
    <property type="nucleotide sequence ID" value="NC_008769.1"/>
</dbReference>
<dbReference type="SMR" id="A1KG00"/>
<dbReference type="KEGG" id="mbb:BCG_0567"/>
<dbReference type="HOGENOM" id="CLU_016922_1_5_11"/>
<dbReference type="UniPathway" id="UPA00251">
    <property type="reaction ID" value="UER00317"/>
</dbReference>
<dbReference type="Proteomes" id="UP000001472">
    <property type="component" value="Chromosome"/>
</dbReference>
<dbReference type="GO" id="GO:0005737">
    <property type="term" value="C:cytoplasm"/>
    <property type="evidence" value="ECO:0007669"/>
    <property type="project" value="UniProtKB-SubCell"/>
</dbReference>
<dbReference type="GO" id="GO:0042286">
    <property type="term" value="F:glutamate-1-semialdehyde 2,1-aminomutase activity"/>
    <property type="evidence" value="ECO:0007669"/>
    <property type="project" value="UniProtKB-UniRule"/>
</dbReference>
<dbReference type="GO" id="GO:0030170">
    <property type="term" value="F:pyridoxal phosphate binding"/>
    <property type="evidence" value="ECO:0007669"/>
    <property type="project" value="InterPro"/>
</dbReference>
<dbReference type="GO" id="GO:0008483">
    <property type="term" value="F:transaminase activity"/>
    <property type="evidence" value="ECO:0007669"/>
    <property type="project" value="InterPro"/>
</dbReference>
<dbReference type="GO" id="GO:0006782">
    <property type="term" value="P:protoporphyrinogen IX biosynthetic process"/>
    <property type="evidence" value="ECO:0007669"/>
    <property type="project" value="UniProtKB-UniRule"/>
</dbReference>
<dbReference type="CDD" id="cd00610">
    <property type="entry name" value="OAT_like"/>
    <property type="match status" value="1"/>
</dbReference>
<dbReference type="FunFam" id="3.40.640.10:FF:000021">
    <property type="entry name" value="Glutamate-1-semialdehyde 2,1-aminomutase"/>
    <property type="match status" value="1"/>
</dbReference>
<dbReference type="Gene3D" id="3.90.1150.10">
    <property type="entry name" value="Aspartate Aminotransferase, domain 1"/>
    <property type="match status" value="1"/>
</dbReference>
<dbReference type="Gene3D" id="3.40.640.10">
    <property type="entry name" value="Type I PLP-dependent aspartate aminotransferase-like (Major domain)"/>
    <property type="match status" value="1"/>
</dbReference>
<dbReference type="HAMAP" id="MF_00375">
    <property type="entry name" value="HemL_aminotrans_3"/>
    <property type="match status" value="1"/>
</dbReference>
<dbReference type="InterPro" id="IPR004639">
    <property type="entry name" value="4pyrrol_synth_GluAld_NH2Trfase"/>
</dbReference>
<dbReference type="InterPro" id="IPR005814">
    <property type="entry name" value="Aminotrans_3"/>
</dbReference>
<dbReference type="InterPro" id="IPR049704">
    <property type="entry name" value="Aminotrans_3_PPA_site"/>
</dbReference>
<dbReference type="InterPro" id="IPR015424">
    <property type="entry name" value="PyrdxlP-dep_Trfase"/>
</dbReference>
<dbReference type="InterPro" id="IPR015421">
    <property type="entry name" value="PyrdxlP-dep_Trfase_major"/>
</dbReference>
<dbReference type="InterPro" id="IPR015422">
    <property type="entry name" value="PyrdxlP-dep_Trfase_small"/>
</dbReference>
<dbReference type="NCBIfam" id="TIGR00713">
    <property type="entry name" value="hemL"/>
    <property type="match status" value="1"/>
</dbReference>
<dbReference type="NCBIfam" id="NF000818">
    <property type="entry name" value="PRK00062.1"/>
    <property type="match status" value="1"/>
</dbReference>
<dbReference type="PANTHER" id="PTHR43713">
    <property type="entry name" value="GLUTAMATE-1-SEMIALDEHYDE 2,1-AMINOMUTASE"/>
    <property type="match status" value="1"/>
</dbReference>
<dbReference type="PANTHER" id="PTHR43713:SF3">
    <property type="entry name" value="GLUTAMATE-1-SEMIALDEHYDE 2,1-AMINOMUTASE 1, CHLOROPLASTIC-RELATED"/>
    <property type="match status" value="1"/>
</dbReference>
<dbReference type="Pfam" id="PF00202">
    <property type="entry name" value="Aminotran_3"/>
    <property type="match status" value="1"/>
</dbReference>
<dbReference type="SUPFAM" id="SSF53383">
    <property type="entry name" value="PLP-dependent transferases"/>
    <property type="match status" value="1"/>
</dbReference>
<dbReference type="PROSITE" id="PS00600">
    <property type="entry name" value="AA_TRANSFER_CLASS_3"/>
    <property type="match status" value="1"/>
</dbReference>
<feature type="chain" id="PRO_0000300925" description="Glutamate-1-semialdehyde 2,1-aminomutase">
    <location>
        <begin position="1"/>
        <end position="462"/>
    </location>
</feature>
<feature type="region of interest" description="Disordered" evidence="2">
    <location>
        <begin position="178"/>
        <end position="200"/>
    </location>
</feature>
<feature type="compositionally biased region" description="Low complexity" evidence="2">
    <location>
        <begin position="182"/>
        <end position="192"/>
    </location>
</feature>
<feature type="modified residue" description="N6-(pyridoxal phosphate)lysine" evidence="1">
    <location>
        <position position="297"/>
    </location>
</feature>